<evidence type="ECO:0000255" key="1">
    <source>
        <dbReference type="HAMAP-Rule" id="MF_01217"/>
    </source>
</evidence>
<evidence type="ECO:0000255" key="2">
    <source>
        <dbReference type="PROSITE-ProRule" id="PRU00258"/>
    </source>
</evidence>
<organism>
    <name type="scientific">Dehalococcoides mccartyi (strain ATCC BAA-2266 / KCTC 15142 / 195)</name>
    <name type="common">Dehalococcoides ethenogenes (strain 195)</name>
    <dbReference type="NCBI Taxonomy" id="243164"/>
    <lineage>
        <taxon>Bacteria</taxon>
        <taxon>Bacillati</taxon>
        <taxon>Chloroflexota</taxon>
        <taxon>Dehalococcoidia</taxon>
        <taxon>Dehalococcoidales</taxon>
        <taxon>Dehalococcoidaceae</taxon>
        <taxon>Dehalococcoides</taxon>
    </lineage>
</organism>
<reference key="1">
    <citation type="journal article" date="2005" name="Science">
        <title>Genome sequence of the PCE-dechlorinating bacterium Dehalococcoides ethenogenes.</title>
        <authorList>
            <person name="Seshadri R."/>
            <person name="Adrian L."/>
            <person name="Fouts D.E."/>
            <person name="Eisen J.A."/>
            <person name="Phillippy A.M."/>
            <person name="Methe B.A."/>
            <person name="Ward N.L."/>
            <person name="Nelson W.C."/>
            <person name="DeBoy R.T."/>
            <person name="Khouri H.M."/>
            <person name="Kolonay J.F."/>
            <person name="Dodson R.J."/>
            <person name="Daugherty S.C."/>
            <person name="Brinkac L.M."/>
            <person name="Sullivan S.A."/>
            <person name="Madupu R."/>
            <person name="Nelson K.E."/>
            <person name="Kang K.H."/>
            <person name="Impraim M."/>
            <person name="Tran K."/>
            <person name="Robinson J.M."/>
            <person name="Forberger H.A."/>
            <person name="Fraser C.M."/>
            <person name="Zinder S.H."/>
            <person name="Heidelberg J.F."/>
        </authorList>
    </citation>
    <scope>NUCLEOTIDE SEQUENCE [LARGE SCALE GENOMIC DNA]</scope>
    <source>
        <strain>ATCC BAA-2266 / KCTC 15142 / 195</strain>
    </source>
</reference>
<comment type="function">
    <text evidence="1">Carrier of the growing fatty acid chain in fatty acid biosynthesis.</text>
</comment>
<comment type="pathway">
    <text evidence="1">Lipid metabolism; fatty acid biosynthesis.</text>
</comment>
<comment type="subcellular location">
    <subcellularLocation>
        <location evidence="1">Cytoplasm</location>
    </subcellularLocation>
</comment>
<comment type="PTM">
    <text evidence="1">4'-phosphopantetheine is transferred from CoA to a specific serine of apo-ACP by AcpS. This modification is essential for activity because fatty acids are bound in thioester linkage to the sulfhydryl of the prosthetic group.</text>
</comment>
<comment type="similarity">
    <text evidence="1">Belongs to the acyl carrier protein (ACP) family.</text>
</comment>
<feature type="chain" id="PRO_1000066597" description="Acyl carrier protein">
    <location>
        <begin position="1"/>
        <end position="86"/>
    </location>
</feature>
<feature type="domain" description="Carrier" evidence="2">
    <location>
        <begin position="2"/>
        <end position="82"/>
    </location>
</feature>
<feature type="modified residue" description="O-(pantetheine 4'-phosphoryl)serine" evidence="2">
    <location>
        <position position="37"/>
    </location>
</feature>
<dbReference type="EMBL" id="CP000027">
    <property type="protein sequence ID" value="AAW39436.1"/>
    <property type="molecule type" value="Genomic_DNA"/>
</dbReference>
<dbReference type="RefSeq" id="WP_010936968.1">
    <property type="nucleotide sequence ID" value="NC_002936.3"/>
</dbReference>
<dbReference type="SMR" id="Q3Z708"/>
<dbReference type="FunCoup" id="Q3Z708">
    <property type="interactions" value="273"/>
</dbReference>
<dbReference type="STRING" id="243164.DET1279"/>
<dbReference type="GeneID" id="3229396"/>
<dbReference type="KEGG" id="det:DET1279"/>
<dbReference type="eggNOG" id="COG0236">
    <property type="taxonomic scope" value="Bacteria"/>
</dbReference>
<dbReference type="HOGENOM" id="CLU_108696_5_1_0"/>
<dbReference type="InParanoid" id="Q3Z708"/>
<dbReference type="UniPathway" id="UPA00094"/>
<dbReference type="Proteomes" id="UP000008289">
    <property type="component" value="Chromosome"/>
</dbReference>
<dbReference type="GO" id="GO:0005829">
    <property type="term" value="C:cytosol"/>
    <property type="evidence" value="ECO:0007669"/>
    <property type="project" value="TreeGrafter"/>
</dbReference>
<dbReference type="GO" id="GO:0016020">
    <property type="term" value="C:membrane"/>
    <property type="evidence" value="ECO:0007669"/>
    <property type="project" value="GOC"/>
</dbReference>
<dbReference type="GO" id="GO:0000035">
    <property type="term" value="F:acyl binding"/>
    <property type="evidence" value="ECO:0007669"/>
    <property type="project" value="TreeGrafter"/>
</dbReference>
<dbReference type="GO" id="GO:0000036">
    <property type="term" value="F:acyl carrier activity"/>
    <property type="evidence" value="ECO:0007669"/>
    <property type="project" value="UniProtKB-UniRule"/>
</dbReference>
<dbReference type="GO" id="GO:0009245">
    <property type="term" value="P:lipid A biosynthetic process"/>
    <property type="evidence" value="ECO:0007669"/>
    <property type="project" value="TreeGrafter"/>
</dbReference>
<dbReference type="Gene3D" id="1.10.1200.10">
    <property type="entry name" value="ACP-like"/>
    <property type="match status" value="1"/>
</dbReference>
<dbReference type="HAMAP" id="MF_01217">
    <property type="entry name" value="Acyl_carrier"/>
    <property type="match status" value="1"/>
</dbReference>
<dbReference type="InterPro" id="IPR003231">
    <property type="entry name" value="ACP"/>
</dbReference>
<dbReference type="InterPro" id="IPR036736">
    <property type="entry name" value="ACP-like_sf"/>
</dbReference>
<dbReference type="InterPro" id="IPR009081">
    <property type="entry name" value="PP-bd_ACP"/>
</dbReference>
<dbReference type="InterPro" id="IPR006162">
    <property type="entry name" value="Ppantetheine_attach_site"/>
</dbReference>
<dbReference type="NCBIfam" id="TIGR00517">
    <property type="entry name" value="acyl_carrier"/>
    <property type="match status" value="1"/>
</dbReference>
<dbReference type="NCBIfam" id="NF002148">
    <property type="entry name" value="PRK00982.1-2"/>
    <property type="match status" value="1"/>
</dbReference>
<dbReference type="NCBIfam" id="NF002150">
    <property type="entry name" value="PRK00982.1-4"/>
    <property type="match status" value="1"/>
</dbReference>
<dbReference type="NCBIfam" id="NF002151">
    <property type="entry name" value="PRK00982.1-5"/>
    <property type="match status" value="1"/>
</dbReference>
<dbReference type="PANTHER" id="PTHR20863">
    <property type="entry name" value="ACYL CARRIER PROTEIN"/>
    <property type="match status" value="1"/>
</dbReference>
<dbReference type="PANTHER" id="PTHR20863:SF76">
    <property type="entry name" value="CARRIER DOMAIN-CONTAINING PROTEIN"/>
    <property type="match status" value="1"/>
</dbReference>
<dbReference type="Pfam" id="PF00550">
    <property type="entry name" value="PP-binding"/>
    <property type="match status" value="1"/>
</dbReference>
<dbReference type="SUPFAM" id="SSF47336">
    <property type="entry name" value="ACP-like"/>
    <property type="match status" value="1"/>
</dbReference>
<dbReference type="PROSITE" id="PS50075">
    <property type="entry name" value="CARRIER"/>
    <property type="match status" value="1"/>
</dbReference>
<dbReference type="PROSITE" id="PS00012">
    <property type="entry name" value="PHOSPHOPANTETHEINE"/>
    <property type="match status" value="1"/>
</dbReference>
<name>ACP_DEHM1</name>
<proteinExistence type="inferred from homology"/>
<accession>Q3Z708</accession>
<keyword id="KW-0963">Cytoplasm</keyword>
<keyword id="KW-0275">Fatty acid biosynthesis</keyword>
<keyword id="KW-0276">Fatty acid metabolism</keyword>
<keyword id="KW-0444">Lipid biosynthesis</keyword>
<keyword id="KW-0443">Lipid metabolism</keyword>
<keyword id="KW-0596">Phosphopantetheine</keyword>
<keyword id="KW-0597">Phosphoprotein</keyword>
<gene>
    <name evidence="1" type="primary">acpP</name>
    <name type="ordered locus">DET1279</name>
</gene>
<sequence length="86" mass="9334">MATVFERVKKVSVEQLGAEEKDVVPAASFADDLGADSLDQVELIMALETEFGTPDAKFEIPDTDAEKLKTVQAVVDYLKSKGIKDS</sequence>
<protein>
    <recommendedName>
        <fullName evidence="1">Acyl carrier protein</fullName>
        <shortName evidence="1">ACP</shortName>
    </recommendedName>
</protein>